<comment type="function">
    <text evidence="1">Catalyzes the condensation reaction of fatty acid synthesis by the addition to an acyl acceptor of two carbons from malonyl-ACP. Catalyzes the first condensation reaction which initiates fatty acid synthesis and may therefore play a role in governing the total rate of fatty acid production. Possesses both acetoacetyl-ACP synthase and acetyl transacylase activities. Its substrate specificity determines the biosynthesis of branched-chain and/or straight-chain of fatty acids.</text>
</comment>
<comment type="catalytic activity">
    <reaction evidence="1">
        <text>malonyl-[ACP] + acetyl-CoA + H(+) = 3-oxobutanoyl-[ACP] + CO2 + CoA</text>
        <dbReference type="Rhea" id="RHEA:12080"/>
        <dbReference type="Rhea" id="RHEA-COMP:9623"/>
        <dbReference type="Rhea" id="RHEA-COMP:9625"/>
        <dbReference type="ChEBI" id="CHEBI:15378"/>
        <dbReference type="ChEBI" id="CHEBI:16526"/>
        <dbReference type="ChEBI" id="CHEBI:57287"/>
        <dbReference type="ChEBI" id="CHEBI:57288"/>
        <dbReference type="ChEBI" id="CHEBI:78449"/>
        <dbReference type="ChEBI" id="CHEBI:78450"/>
        <dbReference type="EC" id="2.3.1.180"/>
    </reaction>
</comment>
<comment type="pathway">
    <text evidence="1">Lipid metabolism; fatty acid biosynthesis.</text>
</comment>
<comment type="subunit">
    <text evidence="1">Homodimer.</text>
</comment>
<comment type="subcellular location">
    <subcellularLocation>
        <location evidence="1">Cytoplasm</location>
    </subcellularLocation>
</comment>
<comment type="domain">
    <text evidence="1">The last Arg residue of the ACP-binding site is essential for the weak association between ACP/AcpP and FabH.</text>
</comment>
<comment type="similarity">
    <text evidence="1">Belongs to the thiolase-like superfamily. FabH family.</text>
</comment>
<dbReference type="EC" id="2.3.1.180" evidence="1"/>
<dbReference type="EMBL" id="AE004092">
    <property type="protein sequence ID" value="AAK34497.1"/>
    <property type="molecule type" value="Genomic_DNA"/>
</dbReference>
<dbReference type="EMBL" id="CP000017">
    <property type="protein sequence ID" value="AAZ52112.1"/>
    <property type="molecule type" value="Genomic_DNA"/>
</dbReference>
<dbReference type="RefSeq" id="NP_269776.1">
    <property type="nucleotide sequence ID" value="NC_002737.2"/>
</dbReference>
<dbReference type="SMR" id="Q99YD2"/>
<dbReference type="PaxDb" id="1314-HKU360_01549"/>
<dbReference type="KEGG" id="spy:SPy_1754"/>
<dbReference type="KEGG" id="spz:M5005_Spy1494"/>
<dbReference type="PATRIC" id="fig|160490.10.peg.1527"/>
<dbReference type="HOGENOM" id="CLU_039592_4_1_9"/>
<dbReference type="OMA" id="WGSEGDK"/>
<dbReference type="UniPathway" id="UPA00094"/>
<dbReference type="Proteomes" id="UP000000750">
    <property type="component" value="Chromosome"/>
</dbReference>
<dbReference type="GO" id="GO:0005737">
    <property type="term" value="C:cytoplasm"/>
    <property type="evidence" value="ECO:0007669"/>
    <property type="project" value="UniProtKB-SubCell"/>
</dbReference>
<dbReference type="GO" id="GO:0004315">
    <property type="term" value="F:3-oxoacyl-[acyl-carrier-protein] synthase activity"/>
    <property type="evidence" value="ECO:0007669"/>
    <property type="project" value="InterPro"/>
</dbReference>
<dbReference type="GO" id="GO:0033818">
    <property type="term" value="F:beta-ketoacyl-acyl-carrier-protein synthase III activity"/>
    <property type="evidence" value="ECO:0007669"/>
    <property type="project" value="UniProtKB-UniRule"/>
</dbReference>
<dbReference type="GO" id="GO:0006633">
    <property type="term" value="P:fatty acid biosynthetic process"/>
    <property type="evidence" value="ECO:0007669"/>
    <property type="project" value="UniProtKB-UniRule"/>
</dbReference>
<dbReference type="CDD" id="cd00830">
    <property type="entry name" value="KAS_III"/>
    <property type="match status" value="1"/>
</dbReference>
<dbReference type="Gene3D" id="3.40.47.10">
    <property type="match status" value="1"/>
</dbReference>
<dbReference type="HAMAP" id="MF_01815">
    <property type="entry name" value="FabH"/>
    <property type="match status" value="1"/>
</dbReference>
<dbReference type="InterPro" id="IPR013747">
    <property type="entry name" value="ACP_syn_III_C"/>
</dbReference>
<dbReference type="InterPro" id="IPR013751">
    <property type="entry name" value="ACP_syn_III_N"/>
</dbReference>
<dbReference type="InterPro" id="IPR004655">
    <property type="entry name" value="FabH"/>
</dbReference>
<dbReference type="InterPro" id="IPR016039">
    <property type="entry name" value="Thiolase-like"/>
</dbReference>
<dbReference type="NCBIfam" id="TIGR00747">
    <property type="entry name" value="fabH"/>
    <property type="match status" value="1"/>
</dbReference>
<dbReference type="NCBIfam" id="NF006829">
    <property type="entry name" value="PRK09352.1"/>
    <property type="match status" value="1"/>
</dbReference>
<dbReference type="PANTHER" id="PTHR43091">
    <property type="entry name" value="3-OXOACYL-[ACYL-CARRIER-PROTEIN] SYNTHASE"/>
    <property type="match status" value="1"/>
</dbReference>
<dbReference type="PANTHER" id="PTHR43091:SF1">
    <property type="entry name" value="BETA-KETOACYL-[ACYL-CARRIER-PROTEIN] SYNTHASE III, CHLOROPLASTIC"/>
    <property type="match status" value="1"/>
</dbReference>
<dbReference type="Pfam" id="PF08545">
    <property type="entry name" value="ACP_syn_III"/>
    <property type="match status" value="1"/>
</dbReference>
<dbReference type="Pfam" id="PF08541">
    <property type="entry name" value="ACP_syn_III_C"/>
    <property type="match status" value="1"/>
</dbReference>
<dbReference type="SUPFAM" id="SSF53901">
    <property type="entry name" value="Thiolase-like"/>
    <property type="match status" value="1"/>
</dbReference>
<evidence type="ECO:0000255" key="1">
    <source>
        <dbReference type="HAMAP-Rule" id="MF_01815"/>
    </source>
</evidence>
<sequence>MIFSKISQVAHYVPQQLVTNNDLASIMDTSHEWIFSRTGIAERHISRDEMTSDLAIQVADQLLTQSGLKADAIDFIIVATISPDATMPSTAAKVQAAIAATSAFAFDMTAACSGFVFALAMADKLIASGAYQNGMVIGAETLSKLVNWQDRATAVLFGDGAGGVLLEASKDKHVLAETLHTDGARCQSLISGETSLSSPYSIGKKAIATIQMDGRAIFDFAIRDVSKSILTLMAQSDITKDDIDYCLLHQANRRILDKIARKIDVPREKFLENMMRYGNTSAASIPILLSEAVQKGQIRLDGTQKILLSGFGGGLTWGSLIVRI</sequence>
<reference key="1">
    <citation type="journal article" date="2001" name="Proc. Natl. Acad. Sci. U.S.A.">
        <title>Complete genome sequence of an M1 strain of Streptococcus pyogenes.</title>
        <authorList>
            <person name="Ferretti J.J."/>
            <person name="McShan W.M."/>
            <person name="Ajdic D.J."/>
            <person name="Savic D.J."/>
            <person name="Savic G."/>
            <person name="Lyon K."/>
            <person name="Primeaux C."/>
            <person name="Sezate S."/>
            <person name="Suvorov A.N."/>
            <person name="Kenton S."/>
            <person name="Lai H.S."/>
            <person name="Lin S.P."/>
            <person name="Qian Y."/>
            <person name="Jia H.G."/>
            <person name="Najar F.Z."/>
            <person name="Ren Q."/>
            <person name="Zhu H."/>
            <person name="Song L."/>
            <person name="White J."/>
            <person name="Yuan X."/>
            <person name="Clifton S.W."/>
            <person name="Roe B.A."/>
            <person name="McLaughlin R.E."/>
        </authorList>
    </citation>
    <scope>NUCLEOTIDE SEQUENCE [LARGE SCALE GENOMIC DNA]</scope>
    <source>
        <strain>ATCC 700294 / SF370 / Serotype M1</strain>
    </source>
</reference>
<reference key="2">
    <citation type="journal article" date="2005" name="J. Infect. Dis.">
        <title>Evolutionary origin and emergence of a highly successful clone of serotype M1 group A Streptococcus involved multiple horizontal gene transfer events.</title>
        <authorList>
            <person name="Sumby P."/>
            <person name="Porcella S.F."/>
            <person name="Madrigal A.G."/>
            <person name="Barbian K.D."/>
            <person name="Virtaneva K."/>
            <person name="Ricklefs S.M."/>
            <person name="Sturdevant D.E."/>
            <person name="Graham M.R."/>
            <person name="Vuopio-Varkila J."/>
            <person name="Hoe N.P."/>
            <person name="Musser J.M."/>
        </authorList>
    </citation>
    <scope>NUCLEOTIDE SEQUENCE [LARGE SCALE GENOMIC DNA]</scope>
    <source>
        <strain>ATCC BAA-947 / MGAS5005 / Serotype M1</strain>
    </source>
</reference>
<keyword id="KW-0012">Acyltransferase</keyword>
<keyword id="KW-0963">Cytoplasm</keyword>
<keyword id="KW-0275">Fatty acid biosynthesis</keyword>
<keyword id="KW-0276">Fatty acid metabolism</keyword>
<keyword id="KW-0444">Lipid biosynthesis</keyword>
<keyword id="KW-0443">Lipid metabolism</keyword>
<keyword id="KW-0511">Multifunctional enzyme</keyword>
<keyword id="KW-1185">Reference proteome</keyword>
<keyword id="KW-0808">Transferase</keyword>
<organism>
    <name type="scientific">Streptococcus pyogenes serotype M1</name>
    <dbReference type="NCBI Taxonomy" id="301447"/>
    <lineage>
        <taxon>Bacteria</taxon>
        <taxon>Bacillati</taxon>
        <taxon>Bacillota</taxon>
        <taxon>Bacilli</taxon>
        <taxon>Lactobacillales</taxon>
        <taxon>Streptococcaceae</taxon>
        <taxon>Streptococcus</taxon>
    </lineage>
</organism>
<proteinExistence type="inferred from homology"/>
<accession>Q99YD2</accession>
<accession>Q48X13</accession>
<protein>
    <recommendedName>
        <fullName evidence="1">Beta-ketoacyl-[acyl-carrier-protein] synthase III</fullName>
        <shortName evidence="1">Beta-ketoacyl-ACP synthase III</shortName>
        <shortName evidence="1">KAS III</shortName>
        <ecNumber evidence="1">2.3.1.180</ecNumber>
    </recommendedName>
    <alternativeName>
        <fullName evidence="1">3-oxoacyl-[acyl-carrier-protein] synthase 3</fullName>
    </alternativeName>
    <alternativeName>
        <fullName evidence="1">3-oxoacyl-[acyl-carrier-protein] synthase III</fullName>
    </alternativeName>
</protein>
<feature type="chain" id="PRO_0000110493" description="Beta-ketoacyl-[acyl-carrier-protein] synthase III">
    <location>
        <begin position="1"/>
        <end position="324"/>
    </location>
</feature>
<feature type="region of interest" description="ACP-binding" evidence="1">
    <location>
        <begin position="250"/>
        <end position="254"/>
    </location>
</feature>
<feature type="active site" evidence="1">
    <location>
        <position position="112"/>
    </location>
</feature>
<feature type="active site" evidence="1">
    <location>
        <position position="249"/>
    </location>
</feature>
<feature type="active site" evidence="1">
    <location>
        <position position="279"/>
    </location>
</feature>
<gene>
    <name evidence="1" type="primary">fabH</name>
    <name type="ordered locus">SPy_1754</name>
    <name type="ordered locus">M5005_Spy1494</name>
</gene>
<name>FABH_STRP1</name>